<dbReference type="EC" id="2.2.1.7" evidence="1"/>
<dbReference type="EMBL" id="CR848038">
    <property type="protein sequence ID" value="CAH63751.1"/>
    <property type="molecule type" value="Genomic_DNA"/>
</dbReference>
<dbReference type="RefSeq" id="WP_011096968.1">
    <property type="nucleotide sequence ID" value="NC_004552.2"/>
</dbReference>
<dbReference type="SMR" id="Q5L6H4"/>
<dbReference type="KEGG" id="cab:CAB301"/>
<dbReference type="eggNOG" id="COG1154">
    <property type="taxonomic scope" value="Bacteria"/>
</dbReference>
<dbReference type="HOGENOM" id="CLU_009227_1_4_0"/>
<dbReference type="OrthoDB" id="9803371at2"/>
<dbReference type="UniPathway" id="UPA00064">
    <property type="reaction ID" value="UER00091"/>
</dbReference>
<dbReference type="Proteomes" id="UP000001012">
    <property type="component" value="Chromosome"/>
</dbReference>
<dbReference type="GO" id="GO:0005829">
    <property type="term" value="C:cytosol"/>
    <property type="evidence" value="ECO:0007669"/>
    <property type="project" value="TreeGrafter"/>
</dbReference>
<dbReference type="GO" id="GO:0008661">
    <property type="term" value="F:1-deoxy-D-xylulose-5-phosphate synthase activity"/>
    <property type="evidence" value="ECO:0007669"/>
    <property type="project" value="UniProtKB-UniRule"/>
</dbReference>
<dbReference type="GO" id="GO:0000287">
    <property type="term" value="F:magnesium ion binding"/>
    <property type="evidence" value="ECO:0007669"/>
    <property type="project" value="UniProtKB-UniRule"/>
</dbReference>
<dbReference type="GO" id="GO:0030976">
    <property type="term" value="F:thiamine pyrophosphate binding"/>
    <property type="evidence" value="ECO:0007669"/>
    <property type="project" value="UniProtKB-UniRule"/>
</dbReference>
<dbReference type="GO" id="GO:0052865">
    <property type="term" value="P:1-deoxy-D-xylulose 5-phosphate biosynthetic process"/>
    <property type="evidence" value="ECO:0007669"/>
    <property type="project" value="UniProtKB-UniPathway"/>
</dbReference>
<dbReference type="GO" id="GO:0019288">
    <property type="term" value="P:isopentenyl diphosphate biosynthetic process, methylerythritol 4-phosphate pathway"/>
    <property type="evidence" value="ECO:0007669"/>
    <property type="project" value="TreeGrafter"/>
</dbReference>
<dbReference type="GO" id="GO:0016114">
    <property type="term" value="P:terpenoid biosynthetic process"/>
    <property type="evidence" value="ECO:0007669"/>
    <property type="project" value="UniProtKB-UniRule"/>
</dbReference>
<dbReference type="GO" id="GO:0009228">
    <property type="term" value="P:thiamine biosynthetic process"/>
    <property type="evidence" value="ECO:0007669"/>
    <property type="project" value="UniProtKB-UniRule"/>
</dbReference>
<dbReference type="CDD" id="cd02007">
    <property type="entry name" value="TPP_DXS"/>
    <property type="match status" value="1"/>
</dbReference>
<dbReference type="CDD" id="cd07033">
    <property type="entry name" value="TPP_PYR_DXS_TK_like"/>
    <property type="match status" value="1"/>
</dbReference>
<dbReference type="Gene3D" id="3.40.50.920">
    <property type="match status" value="1"/>
</dbReference>
<dbReference type="Gene3D" id="3.40.50.970">
    <property type="match status" value="2"/>
</dbReference>
<dbReference type="HAMAP" id="MF_00315">
    <property type="entry name" value="DXP_synth"/>
    <property type="match status" value="1"/>
</dbReference>
<dbReference type="InterPro" id="IPR005477">
    <property type="entry name" value="Dxylulose-5-P_synthase"/>
</dbReference>
<dbReference type="InterPro" id="IPR029061">
    <property type="entry name" value="THDP-binding"/>
</dbReference>
<dbReference type="InterPro" id="IPR009014">
    <property type="entry name" value="Transketo_C/PFOR_II"/>
</dbReference>
<dbReference type="InterPro" id="IPR005475">
    <property type="entry name" value="Transketolase-like_Pyr-bd"/>
</dbReference>
<dbReference type="InterPro" id="IPR033248">
    <property type="entry name" value="Transketolase_C"/>
</dbReference>
<dbReference type="InterPro" id="IPR049557">
    <property type="entry name" value="Transketolase_CS"/>
</dbReference>
<dbReference type="NCBIfam" id="TIGR00204">
    <property type="entry name" value="dxs"/>
    <property type="match status" value="1"/>
</dbReference>
<dbReference type="NCBIfam" id="NF003933">
    <property type="entry name" value="PRK05444.2-2"/>
    <property type="match status" value="1"/>
</dbReference>
<dbReference type="PANTHER" id="PTHR43322">
    <property type="entry name" value="1-D-DEOXYXYLULOSE 5-PHOSPHATE SYNTHASE-RELATED"/>
    <property type="match status" value="1"/>
</dbReference>
<dbReference type="PANTHER" id="PTHR43322:SF5">
    <property type="entry name" value="1-DEOXY-D-XYLULOSE-5-PHOSPHATE SYNTHASE, CHLOROPLASTIC"/>
    <property type="match status" value="1"/>
</dbReference>
<dbReference type="Pfam" id="PF13292">
    <property type="entry name" value="DXP_synthase_N"/>
    <property type="match status" value="1"/>
</dbReference>
<dbReference type="Pfam" id="PF02779">
    <property type="entry name" value="Transket_pyr"/>
    <property type="match status" value="1"/>
</dbReference>
<dbReference type="Pfam" id="PF02780">
    <property type="entry name" value="Transketolase_C"/>
    <property type="match status" value="1"/>
</dbReference>
<dbReference type="SMART" id="SM00861">
    <property type="entry name" value="Transket_pyr"/>
    <property type="match status" value="1"/>
</dbReference>
<dbReference type="SUPFAM" id="SSF52518">
    <property type="entry name" value="Thiamin diphosphate-binding fold (THDP-binding)"/>
    <property type="match status" value="2"/>
</dbReference>
<dbReference type="SUPFAM" id="SSF52922">
    <property type="entry name" value="TK C-terminal domain-like"/>
    <property type="match status" value="1"/>
</dbReference>
<dbReference type="PROSITE" id="PS00801">
    <property type="entry name" value="TRANSKETOLASE_1"/>
    <property type="match status" value="1"/>
</dbReference>
<organism>
    <name type="scientific">Chlamydia abortus (strain DSM 27085 / S26/3)</name>
    <name type="common">Chlamydophila abortus</name>
    <dbReference type="NCBI Taxonomy" id="218497"/>
    <lineage>
        <taxon>Bacteria</taxon>
        <taxon>Pseudomonadati</taxon>
        <taxon>Chlamydiota</taxon>
        <taxon>Chlamydiia</taxon>
        <taxon>Chlamydiales</taxon>
        <taxon>Chlamydiaceae</taxon>
        <taxon>Chlamydia/Chlamydophila group</taxon>
        <taxon>Chlamydia</taxon>
    </lineage>
</organism>
<feature type="chain" id="PRO_0000256396" description="1-deoxy-D-xylulose-5-phosphate synthase">
    <location>
        <begin position="1"/>
        <end position="644"/>
    </location>
</feature>
<feature type="binding site" evidence="1">
    <location>
        <position position="78"/>
    </location>
    <ligand>
        <name>thiamine diphosphate</name>
        <dbReference type="ChEBI" id="CHEBI:58937"/>
    </ligand>
</feature>
<feature type="binding site" evidence="1">
    <location>
        <begin position="120"/>
        <end position="122"/>
    </location>
    <ligand>
        <name>thiamine diphosphate</name>
        <dbReference type="ChEBI" id="CHEBI:58937"/>
    </ligand>
</feature>
<feature type="binding site" evidence="1">
    <location>
        <position position="149"/>
    </location>
    <ligand>
        <name>Mg(2+)</name>
        <dbReference type="ChEBI" id="CHEBI:18420"/>
    </ligand>
</feature>
<feature type="binding site" evidence="1">
    <location>
        <begin position="150"/>
        <end position="151"/>
    </location>
    <ligand>
        <name>thiamine diphosphate</name>
        <dbReference type="ChEBI" id="CHEBI:58937"/>
    </ligand>
</feature>
<feature type="binding site" evidence="1">
    <location>
        <position position="178"/>
    </location>
    <ligand>
        <name>Mg(2+)</name>
        <dbReference type="ChEBI" id="CHEBI:18420"/>
    </ligand>
</feature>
<feature type="binding site" evidence="1">
    <location>
        <position position="178"/>
    </location>
    <ligand>
        <name>thiamine diphosphate</name>
        <dbReference type="ChEBI" id="CHEBI:58937"/>
    </ligand>
</feature>
<feature type="binding site" evidence="1">
    <location>
        <position position="373"/>
    </location>
    <ligand>
        <name>thiamine diphosphate</name>
        <dbReference type="ChEBI" id="CHEBI:58937"/>
    </ligand>
</feature>
<gene>
    <name evidence="1" type="primary">dxs</name>
    <name type="ordered locus">CAB301</name>
</gene>
<evidence type="ECO:0000255" key="1">
    <source>
        <dbReference type="HAMAP-Rule" id="MF_00315"/>
    </source>
</evidence>
<keyword id="KW-0414">Isoprene biosynthesis</keyword>
<keyword id="KW-0460">Magnesium</keyword>
<keyword id="KW-0479">Metal-binding</keyword>
<keyword id="KW-0784">Thiamine biosynthesis</keyword>
<keyword id="KW-0786">Thiamine pyrophosphate</keyword>
<keyword id="KW-0808">Transferase</keyword>
<reference key="1">
    <citation type="journal article" date="2005" name="Genome Res.">
        <title>The Chlamydophila abortus genome sequence reveals an array of variable proteins that contribute to interspecies variation.</title>
        <authorList>
            <person name="Thomson N.R."/>
            <person name="Yeats C."/>
            <person name="Bell K."/>
            <person name="Holden M.T.G."/>
            <person name="Bentley S.D."/>
            <person name="Livingstone M."/>
            <person name="Cerdeno-Tarraga A.-M."/>
            <person name="Harris B."/>
            <person name="Doggett J."/>
            <person name="Ormond D."/>
            <person name="Mungall K."/>
            <person name="Clarke K."/>
            <person name="Feltwell T."/>
            <person name="Hance Z."/>
            <person name="Sanders M."/>
            <person name="Quail M.A."/>
            <person name="Price C."/>
            <person name="Barrell B.G."/>
            <person name="Parkhill J."/>
            <person name="Longbottom D."/>
        </authorList>
    </citation>
    <scope>NUCLEOTIDE SEQUENCE [LARGE SCALE GENOMIC DNA]</scope>
    <source>
        <strain>DSM 27085 / S26/3</strain>
    </source>
</reference>
<sequence>MTSYTSSILSQISSPEDLKKLSCSELSLLAEQIRHKIISVLIKTGGHLASNLGIIELTIALHYVFSSPEDKFIFDVGHQTYTHKLLTGRNIEEFERIRHDGGLSGFTSPLESAHDLFFSGHAGNALSLALGMAKATEKSRTHVLPILGDAAFSCGLTFEALNNIHTDLSKFIVILNDNNMSISKNVGVMSKSLSQWIHHPKFSLLSRKLERSLSKIPRYGKSIAKCSHKISTCLRSLVCPIPIFEQFNLAYMGPVDGHDIKALVSLFQKVRDLPFPILIHVCTKKGKGLEIAQENPTKYHGVKANFKLTAEDKLLPTIQPQLTYPDIFGKTVCKLGEISPNLHVVTPAMSLGSRLETFKGTFPERFIDVGIAEGHAVTFSAGIAKANTPVICSIYSTFLHRAMDNVFHDVCLQNLPVIFGIDRAGLAYGDGCSHHGIYDLSFLRAMPNMIICQPRSSIVFQQLLQSSLHWQRPSAIRYPNIPALQGDPIATDINLYRDPGLGEILSQGEDVLIVGLGHMCSAALSIKLQLLSHGISATVVDPIFIKPFDNNLFSILLMHHSKVIIIEEHSIRGGLASEFNDFLATYNFKVDVLHFGIPDSIFSHGDKENLLQRVGLDVDSMVKRILTYFNFRTKKAPSNKLSIV</sequence>
<name>DXS_CHLAB</name>
<proteinExistence type="inferred from homology"/>
<accession>Q5L6H4</accession>
<comment type="function">
    <text evidence="1">Catalyzes the acyloin condensation reaction between C atoms 2 and 3 of pyruvate and glyceraldehyde 3-phosphate to yield 1-deoxy-D-xylulose-5-phosphate (DXP).</text>
</comment>
<comment type="catalytic activity">
    <reaction evidence="1">
        <text>D-glyceraldehyde 3-phosphate + pyruvate + H(+) = 1-deoxy-D-xylulose 5-phosphate + CO2</text>
        <dbReference type="Rhea" id="RHEA:12605"/>
        <dbReference type="ChEBI" id="CHEBI:15361"/>
        <dbReference type="ChEBI" id="CHEBI:15378"/>
        <dbReference type="ChEBI" id="CHEBI:16526"/>
        <dbReference type="ChEBI" id="CHEBI:57792"/>
        <dbReference type="ChEBI" id="CHEBI:59776"/>
        <dbReference type="EC" id="2.2.1.7"/>
    </reaction>
</comment>
<comment type="cofactor">
    <cofactor evidence="1">
        <name>Mg(2+)</name>
        <dbReference type="ChEBI" id="CHEBI:18420"/>
    </cofactor>
    <text evidence="1">Binds 1 Mg(2+) ion per subunit.</text>
</comment>
<comment type="cofactor">
    <cofactor evidence="1">
        <name>thiamine diphosphate</name>
        <dbReference type="ChEBI" id="CHEBI:58937"/>
    </cofactor>
    <text evidence="1">Binds 1 thiamine pyrophosphate per subunit.</text>
</comment>
<comment type="pathway">
    <text evidence="1">Metabolic intermediate biosynthesis; 1-deoxy-D-xylulose 5-phosphate biosynthesis; 1-deoxy-D-xylulose 5-phosphate from D-glyceraldehyde 3-phosphate and pyruvate: step 1/1.</text>
</comment>
<comment type="subunit">
    <text evidence="1">Homodimer.</text>
</comment>
<comment type="similarity">
    <text evidence="1">Belongs to the transketolase family. DXPS subfamily.</text>
</comment>
<protein>
    <recommendedName>
        <fullName evidence="1">1-deoxy-D-xylulose-5-phosphate synthase</fullName>
        <ecNumber evidence="1">2.2.1.7</ecNumber>
    </recommendedName>
    <alternativeName>
        <fullName evidence="1">1-deoxyxylulose-5-phosphate synthase</fullName>
        <shortName evidence="1">DXP synthase</shortName>
        <shortName evidence="1">DXPS</shortName>
    </alternativeName>
</protein>